<accession>P10994</accession>
<evidence type="ECO:0000250" key="1">
    <source>
        <dbReference type="UniProtKB" id="P68133"/>
    </source>
</evidence>
<evidence type="ECO:0000305" key="2"/>
<reference key="1">
    <citation type="journal article" date="1987" name="J. Mol. Biol.">
        <title>There is an alpha-actin skeletal muscle-specific gene in a salamander (Pleurodeles waltlii).</title>
        <authorList>
            <person name="Khrestchatisky M."/>
            <person name="Fontes M."/>
        </authorList>
    </citation>
    <scope>NUCLEOTIDE SEQUENCE [MRNA]</scope>
</reference>
<dbReference type="EMBL" id="X05106">
    <property type="protein sequence ID" value="CAA28753.1"/>
    <property type="molecule type" value="mRNA"/>
</dbReference>
<dbReference type="PIR" id="A26337">
    <property type="entry name" value="A26337"/>
</dbReference>
<dbReference type="SMR" id="P10994"/>
<dbReference type="GO" id="GO:0005737">
    <property type="term" value="C:cytoplasm"/>
    <property type="evidence" value="ECO:0007669"/>
    <property type="project" value="UniProtKB-KW"/>
</dbReference>
<dbReference type="GO" id="GO:0005856">
    <property type="term" value="C:cytoskeleton"/>
    <property type="evidence" value="ECO:0007669"/>
    <property type="project" value="UniProtKB-SubCell"/>
</dbReference>
<dbReference type="GO" id="GO:0005524">
    <property type="term" value="F:ATP binding"/>
    <property type="evidence" value="ECO:0007669"/>
    <property type="project" value="UniProtKB-KW"/>
</dbReference>
<dbReference type="FunFam" id="3.30.420.40:FF:000131">
    <property type="entry name" value="Actin, alpha skeletal muscle"/>
    <property type="match status" value="1"/>
</dbReference>
<dbReference type="FunFam" id="3.30.420.40:FF:000058">
    <property type="entry name" value="Putative actin-related protein 5"/>
    <property type="match status" value="1"/>
</dbReference>
<dbReference type="Gene3D" id="3.30.420.40">
    <property type="match status" value="2"/>
</dbReference>
<dbReference type="Gene3D" id="3.90.640.10">
    <property type="entry name" value="Actin, Chain A, domain 4"/>
    <property type="match status" value="1"/>
</dbReference>
<dbReference type="InterPro" id="IPR004000">
    <property type="entry name" value="Actin"/>
</dbReference>
<dbReference type="InterPro" id="IPR004001">
    <property type="entry name" value="Actin_CS"/>
</dbReference>
<dbReference type="InterPro" id="IPR043129">
    <property type="entry name" value="ATPase_NBD"/>
</dbReference>
<dbReference type="PANTHER" id="PTHR11937">
    <property type="entry name" value="ACTIN"/>
    <property type="match status" value="1"/>
</dbReference>
<dbReference type="Pfam" id="PF00022">
    <property type="entry name" value="Actin"/>
    <property type="match status" value="1"/>
</dbReference>
<dbReference type="SMART" id="SM00268">
    <property type="entry name" value="ACTIN"/>
    <property type="match status" value="1"/>
</dbReference>
<dbReference type="SUPFAM" id="SSF53067">
    <property type="entry name" value="Actin-like ATPase domain"/>
    <property type="match status" value="1"/>
</dbReference>
<dbReference type="PROSITE" id="PS00432">
    <property type="entry name" value="ACTINS_2"/>
    <property type="match status" value="1"/>
</dbReference>
<protein>
    <recommendedName>
        <fullName>Actin, alpha skeletal muscle</fullName>
    </recommendedName>
</protein>
<comment type="function">
    <text>Actins are highly conserved proteins that are involved in various types of cell motility and are ubiquitously expressed in all eukaryotic cells.</text>
</comment>
<comment type="subunit">
    <text>Polymerization of globular actin (G-actin) leads to a structural filament (F-actin) in the form of a two-stranded helix. Each actin can bind to 4 others.</text>
</comment>
<comment type="subcellular location">
    <subcellularLocation>
        <location>Cytoplasm</location>
        <location>Cytoskeleton</location>
    </subcellularLocation>
</comment>
<comment type="PTM">
    <text evidence="1">Methylated at His-75 by SETD3.</text>
</comment>
<comment type="similarity">
    <text evidence="2">Belongs to the actin family.</text>
</comment>
<feature type="chain" id="PRO_0000089055" description="Actin, alpha skeletal muscle">
    <location>
        <begin position="1" status="less than"/>
        <end position="125"/>
    </location>
</feature>
<feature type="non-terminal residue">
    <location>
        <position position="1"/>
    </location>
</feature>
<name>ACTS_PLEWA</name>
<sequence length="125" mass="14102">GNERFRCPETLFQPSFIGMESAGIHETTYNSIMKCDIDIRKDLYANNVMSGGTTMYPGIADRMQKEITALAPSTMKIKIIAPPERKYSVWIGGSILASLSTFQQMWITKQEYDEAGPSIVHRKCF</sequence>
<proteinExistence type="evidence at transcript level"/>
<organism>
    <name type="scientific">Pleurodeles waltl</name>
    <name type="common">Iberian ribbed newt</name>
    <dbReference type="NCBI Taxonomy" id="8319"/>
    <lineage>
        <taxon>Eukaryota</taxon>
        <taxon>Metazoa</taxon>
        <taxon>Chordata</taxon>
        <taxon>Craniata</taxon>
        <taxon>Vertebrata</taxon>
        <taxon>Euteleostomi</taxon>
        <taxon>Amphibia</taxon>
        <taxon>Batrachia</taxon>
        <taxon>Caudata</taxon>
        <taxon>Salamandroidea</taxon>
        <taxon>Salamandridae</taxon>
        <taxon>Pleurodelinae</taxon>
        <taxon>Pleurodeles</taxon>
    </lineage>
</organism>
<keyword id="KW-0067">ATP-binding</keyword>
<keyword id="KW-0963">Cytoplasm</keyword>
<keyword id="KW-0206">Cytoskeleton</keyword>
<keyword id="KW-0514">Muscle protein</keyword>
<keyword id="KW-0547">Nucleotide-binding</keyword>